<accession>O29798</accession>
<gene>
    <name type="ordered locus">AF_0451</name>
</gene>
<dbReference type="EMBL" id="AE000782">
    <property type="protein sequence ID" value="AAB90789.1"/>
    <property type="molecule type" value="Genomic_DNA"/>
</dbReference>
<dbReference type="PIR" id="C69306">
    <property type="entry name" value="C69306"/>
</dbReference>
<dbReference type="SMR" id="O29798"/>
<dbReference type="STRING" id="224325.AF_0451"/>
<dbReference type="PaxDb" id="224325-AF_0451"/>
<dbReference type="EnsemblBacteria" id="AAB90789">
    <property type="protein sequence ID" value="AAB90789"/>
    <property type="gene ID" value="AF_0451"/>
</dbReference>
<dbReference type="KEGG" id="afu:AF_0451"/>
<dbReference type="eggNOG" id="arCOG11224">
    <property type="taxonomic scope" value="Archaea"/>
</dbReference>
<dbReference type="HOGENOM" id="CLU_2032745_0_0_2"/>
<dbReference type="Proteomes" id="UP000002199">
    <property type="component" value="Chromosome"/>
</dbReference>
<sequence>MTMIMRSIIDSLEALFSSFFSSIAPNLYEVLNFHCKKHTGMNFAEATLKNPKLTYEFLVKFFDSEMAVDVLDYLLSNFLKKYSIRAYGILKSFKSGDNKKLIEVAKLYSKVMQNGGGKDRD</sequence>
<reference key="1">
    <citation type="journal article" date="1997" name="Nature">
        <title>The complete genome sequence of the hyperthermophilic, sulphate-reducing archaeon Archaeoglobus fulgidus.</title>
        <authorList>
            <person name="Klenk H.-P."/>
            <person name="Clayton R.A."/>
            <person name="Tomb J.-F."/>
            <person name="White O."/>
            <person name="Nelson K.E."/>
            <person name="Ketchum K.A."/>
            <person name="Dodson R.J."/>
            <person name="Gwinn M.L."/>
            <person name="Hickey E.K."/>
            <person name="Peterson J.D."/>
            <person name="Richardson D.L."/>
            <person name="Kerlavage A.R."/>
            <person name="Graham D.E."/>
            <person name="Kyrpides N.C."/>
            <person name="Fleischmann R.D."/>
            <person name="Quackenbush J."/>
            <person name="Lee N.H."/>
            <person name="Sutton G.G."/>
            <person name="Gill S.R."/>
            <person name="Kirkness E.F."/>
            <person name="Dougherty B.A."/>
            <person name="McKenney K."/>
            <person name="Adams M.D."/>
            <person name="Loftus B.J."/>
            <person name="Peterson S.N."/>
            <person name="Reich C.I."/>
            <person name="McNeil L.K."/>
            <person name="Badger J.H."/>
            <person name="Glodek A."/>
            <person name="Zhou L."/>
            <person name="Overbeek R."/>
            <person name="Gocayne J.D."/>
            <person name="Weidman J.F."/>
            <person name="McDonald L.A."/>
            <person name="Utterback T.R."/>
            <person name="Cotton M.D."/>
            <person name="Spriggs T."/>
            <person name="Artiach P."/>
            <person name="Kaine B.P."/>
            <person name="Sykes S.M."/>
            <person name="Sadow P.W."/>
            <person name="D'Andrea K.P."/>
            <person name="Bowman C."/>
            <person name="Fujii C."/>
            <person name="Garland S.A."/>
            <person name="Mason T.M."/>
            <person name="Olsen G.J."/>
            <person name="Fraser C.M."/>
            <person name="Smith H.O."/>
            <person name="Woese C.R."/>
            <person name="Venter J.C."/>
        </authorList>
    </citation>
    <scope>NUCLEOTIDE SEQUENCE [LARGE SCALE GENOMIC DNA]</scope>
    <source>
        <strain>ATCC 49558 / DSM 4304 / JCM 9628 / NBRC 100126 / VC-16</strain>
    </source>
</reference>
<name>Y451_ARCFU</name>
<keyword id="KW-1185">Reference proteome</keyword>
<organism>
    <name type="scientific">Archaeoglobus fulgidus (strain ATCC 49558 / DSM 4304 / JCM 9628 / NBRC 100126 / VC-16)</name>
    <dbReference type="NCBI Taxonomy" id="224325"/>
    <lineage>
        <taxon>Archaea</taxon>
        <taxon>Methanobacteriati</taxon>
        <taxon>Methanobacteriota</taxon>
        <taxon>Archaeoglobi</taxon>
        <taxon>Archaeoglobales</taxon>
        <taxon>Archaeoglobaceae</taxon>
        <taxon>Archaeoglobus</taxon>
    </lineage>
</organism>
<protein>
    <recommendedName>
        <fullName>Uncharacterized protein AF_0451</fullName>
    </recommendedName>
</protein>
<feature type="chain" id="PRO_0000127878" description="Uncharacterized protein AF_0451">
    <location>
        <begin position="1"/>
        <end position="121"/>
    </location>
</feature>
<proteinExistence type="predicted"/>